<geneLocation type="mitochondrion"/>
<organism>
    <name type="scientific">Diaemus youngi</name>
    <name type="common">White-winged vampire bat</name>
    <dbReference type="NCBI Taxonomy" id="148087"/>
    <lineage>
        <taxon>Eukaryota</taxon>
        <taxon>Metazoa</taxon>
        <taxon>Chordata</taxon>
        <taxon>Craniata</taxon>
        <taxon>Vertebrata</taxon>
        <taxon>Euteleostomi</taxon>
        <taxon>Mammalia</taxon>
        <taxon>Eutheria</taxon>
        <taxon>Laurasiatheria</taxon>
        <taxon>Chiroptera</taxon>
        <taxon>Yangochiroptera</taxon>
        <taxon>Phyllostomidae</taxon>
        <taxon>Desmodontinae</taxon>
        <taxon>Diaemus</taxon>
    </lineage>
</organism>
<dbReference type="EC" id="7.1.1.2"/>
<dbReference type="EMBL" id="AB079812">
    <property type="protein sequence ID" value="BAB92037.1"/>
    <property type="molecule type" value="Genomic_DNA"/>
</dbReference>
<dbReference type="SMR" id="Q8M889"/>
<dbReference type="GO" id="GO:0005743">
    <property type="term" value="C:mitochondrial inner membrane"/>
    <property type="evidence" value="ECO:0007669"/>
    <property type="project" value="UniProtKB-SubCell"/>
</dbReference>
<dbReference type="GO" id="GO:0008137">
    <property type="term" value="F:NADH dehydrogenase (ubiquinone) activity"/>
    <property type="evidence" value="ECO:0007669"/>
    <property type="project" value="UniProtKB-EC"/>
</dbReference>
<dbReference type="GO" id="GO:0009060">
    <property type="term" value="P:aerobic respiration"/>
    <property type="evidence" value="ECO:0007669"/>
    <property type="project" value="TreeGrafter"/>
</dbReference>
<dbReference type="HAMAP" id="MF_01350">
    <property type="entry name" value="NDH1_NuoH"/>
    <property type="match status" value="1"/>
</dbReference>
<dbReference type="InterPro" id="IPR001694">
    <property type="entry name" value="NADH_UbQ_OxRdtase_su1/FPO"/>
</dbReference>
<dbReference type="InterPro" id="IPR018086">
    <property type="entry name" value="NADH_UbQ_OxRdtase_su1_CS"/>
</dbReference>
<dbReference type="PANTHER" id="PTHR11432">
    <property type="entry name" value="NADH DEHYDROGENASE SUBUNIT 1"/>
    <property type="match status" value="1"/>
</dbReference>
<dbReference type="PANTHER" id="PTHR11432:SF3">
    <property type="entry name" value="NADH-UBIQUINONE OXIDOREDUCTASE CHAIN 1"/>
    <property type="match status" value="1"/>
</dbReference>
<dbReference type="Pfam" id="PF00146">
    <property type="entry name" value="NADHdh"/>
    <property type="match status" value="1"/>
</dbReference>
<dbReference type="PROSITE" id="PS00667">
    <property type="entry name" value="COMPLEX1_ND1_1"/>
    <property type="match status" value="1"/>
</dbReference>
<dbReference type="PROSITE" id="PS00668">
    <property type="entry name" value="COMPLEX1_ND1_2"/>
    <property type="match status" value="1"/>
</dbReference>
<keyword id="KW-0249">Electron transport</keyword>
<keyword id="KW-0472">Membrane</keyword>
<keyword id="KW-0496">Mitochondrion</keyword>
<keyword id="KW-0999">Mitochondrion inner membrane</keyword>
<keyword id="KW-0520">NAD</keyword>
<keyword id="KW-0679">Respiratory chain</keyword>
<keyword id="KW-1278">Translocase</keyword>
<keyword id="KW-0812">Transmembrane</keyword>
<keyword id="KW-1133">Transmembrane helix</keyword>
<keyword id="KW-0813">Transport</keyword>
<keyword id="KW-0830">Ubiquinone</keyword>
<accession>Q8M889</accession>
<proteinExistence type="inferred from homology"/>
<protein>
    <recommendedName>
        <fullName>NADH-ubiquinone oxidoreductase chain 1</fullName>
        <ecNumber>7.1.1.2</ecNumber>
    </recommendedName>
    <alternativeName>
        <fullName>NADH dehydrogenase subunit 1</fullName>
    </alternativeName>
</protein>
<comment type="function">
    <text evidence="1">Core subunit of the mitochondrial membrane respiratory chain NADH dehydrogenase (Complex I) that is believed to belong to the minimal assembly required for catalysis. Complex I functions in the transfer of electrons from NADH to the respiratory chain. The immediate electron acceptor for the enzyme is believed to be ubiquinone (By similarity).</text>
</comment>
<comment type="catalytic activity">
    <reaction>
        <text>a ubiquinone + NADH + 5 H(+)(in) = a ubiquinol + NAD(+) + 4 H(+)(out)</text>
        <dbReference type="Rhea" id="RHEA:29091"/>
        <dbReference type="Rhea" id="RHEA-COMP:9565"/>
        <dbReference type="Rhea" id="RHEA-COMP:9566"/>
        <dbReference type="ChEBI" id="CHEBI:15378"/>
        <dbReference type="ChEBI" id="CHEBI:16389"/>
        <dbReference type="ChEBI" id="CHEBI:17976"/>
        <dbReference type="ChEBI" id="CHEBI:57540"/>
        <dbReference type="ChEBI" id="CHEBI:57945"/>
        <dbReference type="EC" id="7.1.1.2"/>
    </reaction>
</comment>
<comment type="subcellular location">
    <subcellularLocation>
        <location evidence="1">Mitochondrion inner membrane</location>
        <topology evidence="1">Multi-pass membrane protein</topology>
    </subcellularLocation>
</comment>
<comment type="similarity">
    <text evidence="3">Belongs to the complex I subunit 1 family.</text>
</comment>
<name>NU1M_DIAYO</name>
<reference key="1">
    <citation type="journal article" date="2002" name="J. Mol. Evol.">
        <title>Intra- and interfamily relationships of Vespertilionidae inferred by various molecular markers including SINE insertion data.</title>
        <authorList>
            <person name="Kawai K."/>
            <person name="Nikaido M."/>
            <person name="Harada M."/>
            <person name="Matsumura S."/>
            <person name="Lin L.K."/>
            <person name="Wu Y."/>
            <person name="Hasegawa M."/>
            <person name="Okada N."/>
        </authorList>
    </citation>
    <scope>NUCLEOTIDE SEQUENCE [GENOMIC DNA]</scope>
</reference>
<feature type="chain" id="PRO_0000117383" description="NADH-ubiquinone oxidoreductase chain 1">
    <location>
        <begin position="1"/>
        <end position="318"/>
    </location>
</feature>
<feature type="transmembrane region" description="Helical" evidence="2">
    <location>
        <begin position="2"/>
        <end position="22"/>
    </location>
</feature>
<feature type="transmembrane region" description="Helical" evidence="2">
    <location>
        <begin position="70"/>
        <end position="90"/>
    </location>
</feature>
<feature type="transmembrane region" description="Helical" evidence="2">
    <location>
        <begin position="102"/>
        <end position="122"/>
    </location>
</feature>
<feature type="transmembrane region" description="Helical" evidence="2">
    <location>
        <begin position="147"/>
        <end position="167"/>
    </location>
</feature>
<feature type="transmembrane region" description="Helical" evidence="2">
    <location>
        <begin position="171"/>
        <end position="191"/>
    </location>
</feature>
<feature type="transmembrane region" description="Helical" evidence="2">
    <location>
        <begin position="222"/>
        <end position="242"/>
    </location>
</feature>
<feature type="transmembrane region" description="Helical" evidence="2">
    <location>
        <begin position="253"/>
        <end position="273"/>
    </location>
</feature>
<feature type="transmembrane region" description="Helical" evidence="2">
    <location>
        <begin position="294"/>
        <end position="314"/>
    </location>
</feature>
<gene>
    <name type="primary">MT-ND1</name>
    <name type="synonym">MTND1</name>
    <name type="synonym">NADH1</name>
    <name type="synonym">ND1</name>
</gene>
<evidence type="ECO:0000250" key="1"/>
<evidence type="ECO:0000255" key="2"/>
<evidence type="ECO:0000305" key="3"/>
<sequence>MFLTNLLMTIAPVLLAVAFLTLVERKILGYMQLRKGPIVVGPYGLLQPISDAVKLFTKEPLRPLTSSTTMFLMAPTLALALALTMWIPLPMPLPLTNMNLSLLFMLAMSSLAVYAILWSGWASNSNYALIGALRAVAQTISYEVTLAIILLSVLLLSGSYSLSTLIITQEYMWLILPSWPLAMMWFISTLAETNRAPFDLTEGESELVSGFNVEYAGGPFALFFLAEYTNIIMMNALTTILFLGAYNNPNTPELYTINFTTKTLLLTMAFLWIRASYPRFRYDQLMHLLWKNFLPLTLALCMWYTALPIITAAIPPQT</sequence>